<feature type="chain" id="PRO_0000459827" description="Hex-5-enoyl-[acyl-carrier protein] acetylenase">
    <location>
        <begin position="1"/>
        <end position="321"/>
    </location>
</feature>
<feature type="transmembrane region" description="Helical" evidence="2">
    <location>
        <begin position="36"/>
        <end position="56"/>
    </location>
</feature>
<feature type="transmembrane region" description="Helical" evidence="2">
    <location>
        <begin position="62"/>
        <end position="82"/>
    </location>
</feature>
<feature type="transmembrane region" description="Helical" evidence="2">
    <location>
        <begin position="99"/>
        <end position="119"/>
    </location>
</feature>
<feature type="transmembrane region" description="Helical" evidence="2">
    <location>
        <begin position="188"/>
        <end position="208"/>
    </location>
</feature>
<feature type="short sequence motif" description="Histidine box-1" evidence="7">
    <location>
        <begin position="83"/>
        <end position="88"/>
    </location>
</feature>
<feature type="short sequence motif" description="Histidine box-2" evidence="7">
    <location>
        <begin position="120"/>
        <end position="124"/>
    </location>
</feature>
<feature type="short sequence motif" description="Histidine box-3" evidence="7">
    <location>
        <begin position="269"/>
        <end position="273"/>
    </location>
</feature>
<sequence>MSMPMDVSKKSFKPAKTQKSKTISNDYIKGLQTKHFLLYNVIPTIGTITAIALLWWYPISSVEIGLLIGMWALSMIGMSVGLHRYFAHRAFKTSQTMSVILAILGCMGAQGPVVSWVAVHRRHHEYSDLPGDPHSPNPELLGEGIFGTLRGLWHAHVGWLTNHEYPNPMYYAPELMRDKTISKINRNYVVWIVLGLLIPTILGGIIHGSWIGAVEGLLWGGFVRMFVVDNSILSINSFSHAFGTHPFDSKDQSRNNIWVAIPTFGESWQNNHHTFENSAAIGLKWWQIDLGYCLIWGLEKLGLVWDVKLPTAKMIEAKKLA</sequence>
<name>JAMB_MOOP1</name>
<proteinExistence type="evidence at protein level"/>
<organism>
    <name type="scientific">Moorena producens (strain JHB)</name>
    <dbReference type="NCBI Taxonomy" id="1454205"/>
    <lineage>
        <taxon>Bacteria</taxon>
        <taxon>Bacillati</taxon>
        <taxon>Cyanobacteriota</taxon>
        <taxon>Cyanophyceae</taxon>
        <taxon>Oscillatoriophycideae</taxon>
        <taxon>Oscillatoriales</taxon>
        <taxon>Oscillatoriaceae</taxon>
        <taxon>Moorena</taxon>
    </lineage>
</organism>
<evidence type="ECO:0000250" key="1">
    <source>
        <dbReference type="UniProtKB" id="O00767"/>
    </source>
</evidence>
<evidence type="ECO:0000255" key="2"/>
<evidence type="ECO:0000269" key="3">
    <source>
    </source>
</evidence>
<evidence type="ECO:0000269" key="4">
    <source>
    </source>
</evidence>
<evidence type="ECO:0000303" key="5">
    <source>
    </source>
</evidence>
<evidence type="ECO:0000305" key="6"/>
<evidence type="ECO:0000305" key="7">
    <source>
    </source>
</evidence>
<evidence type="ECO:0000312" key="8">
    <source>
        <dbReference type="EMBL" id="AOY84951.2"/>
    </source>
</evidence>
<keyword id="KW-0276">Fatty acid metabolism</keyword>
<keyword id="KW-0408">Iron</keyword>
<keyword id="KW-0443">Lipid metabolism</keyword>
<keyword id="KW-0472">Membrane</keyword>
<keyword id="KW-0560">Oxidoreductase</keyword>
<keyword id="KW-0812">Transmembrane</keyword>
<keyword id="KW-1133">Transmembrane helix</keyword>
<gene>
    <name evidence="5" type="primary">jamB</name>
    <name evidence="8" type="ORF">BJP36_29295</name>
</gene>
<comment type="function">
    <text evidence="4">Desaturase involved in the biosynthesis of jamaicamides, which show sodium channel blocking activity and fish toxicity (PubMed:25531891). Catalyzes the conversion of 5-hexenoyl loaded onto the acyl carrier protein JamC (5-hexenoyl-JamC) to 5-hexynoyl-JamC (PubMed:25531891). Can also catalyze the conversion of hexanoyl-JamC to 5-hexenoyl-JamC, but it cannot use free 5-hexenoic acid, 5-hexenoyl-CoA, 2-hexenoyl-JamC, 3-hexenoyl-JamC or 4-hexenoyl-JamC (PubMed:25531891). Is specific for C(6) chains, and cannot use 4-pentenoyl-JamC, 6-heptenoyl-JamC or 7-octenoyl-JamC as substrate (PubMed:25531891).</text>
</comment>
<comment type="catalytic activity">
    <reaction evidence="4">
        <text>5-hexenoyl-[ACP] + 2 reduced [2Fe-2S]-[ferredoxin] + O2 + 2 H(+) = 5-hexynoyl-[ACP] + 2 oxidized [2Fe-2S]-[ferredoxin] + 2 H2O</text>
        <dbReference type="Rhea" id="RHEA:46568"/>
        <dbReference type="Rhea" id="RHEA-COMP:10000"/>
        <dbReference type="Rhea" id="RHEA-COMP:10001"/>
        <dbReference type="Rhea" id="RHEA-COMP:11591"/>
        <dbReference type="Rhea" id="RHEA-COMP:11592"/>
        <dbReference type="ChEBI" id="CHEBI:15377"/>
        <dbReference type="ChEBI" id="CHEBI:15378"/>
        <dbReference type="ChEBI" id="CHEBI:15379"/>
        <dbReference type="ChEBI" id="CHEBI:33737"/>
        <dbReference type="ChEBI" id="CHEBI:33738"/>
        <dbReference type="ChEBI" id="CHEBI:86298"/>
        <dbReference type="ChEBI" id="CHEBI:86299"/>
        <dbReference type="EC" id="1.14.19.40"/>
    </reaction>
    <physiologicalReaction direction="left-to-right" evidence="4">
        <dbReference type="Rhea" id="RHEA:46569"/>
    </physiologicalReaction>
</comment>
<comment type="catalytic activity">
    <reaction evidence="4">
        <text>hexanoyl-[ACP] + 2 reduced [2Fe-2S]-[ferredoxin] + O2 + 2 H(+) = 5-hexenoyl-[ACP] + 2 oxidized [2Fe-2S]-[ferredoxin] + 2 H2O</text>
        <dbReference type="Rhea" id="RHEA:46572"/>
        <dbReference type="Rhea" id="RHEA-COMP:9632"/>
        <dbReference type="Rhea" id="RHEA-COMP:10000"/>
        <dbReference type="Rhea" id="RHEA-COMP:10001"/>
        <dbReference type="Rhea" id="RHEA-COMP:11591"/>
        <dbReference type="ChEBI" id="CHEBI:15377"/>
        <dbReference type="ChEBI" id="CHEBI:15378"/>
        <dbReference type="ChEBI" id="CHEBI:15379"/>
        <dbReference type="ChEBI" id="CHEBI:33737"/>
        <dbReference type="ChEBI" id="CHEBI:33738"/>
        <dbReference type="ChEBI" id="CHEBI:78459"/>
        <dbReference type="ChEBI" id="CHEBI:86298"/>
        <dbReference type="EC" id="1.14.19.40"/>
    </reaction>
    <physiologicalReaction direction="left-to-right" evidence="4">
        <dbReference type="Rhea" id="RHEA:46573"/>
    </physiologicalReaction>
</comment>
<comment type="cofactor">
    <cofactor evidence="1">
        <name>Fe(2+)</name>
        <dbReference type="ChEBI" id="CHEBI:29033"/>
    </cofactor>
</comment>
<comment type="subcellular location">
    <subcellularLocation>
        <location evidence="2">Membrane</location>
        <topology evidence="2">Multi-pass membrane protein</topology>
    </subcellularLocation>
</comment>
<comment type="induction">
    <text evidence="3">Part of the jamaicamide (jam) biosynthetic gene cluster, encoding enzymes catalyzing most or all of jamaicamide biosynthesis.</text>
</comment>
<comment type="domain">
    <text evidence="1">The histidine box domains are involved in binding the catalytic metal ions.</text>
</comment>
<comment type="similarity">
    <text evidence="6">Belongs to the fatty acid desaturase type 2 family.</text>
</comment>
<dbReference type="EC" id="1.14.19.40" evidence="4"/>
<dbReference type="EMBL" id="AY522504">
    <property type="protein sequence ID" value="AAS98775.1"/>
    <property type="molecule type" value="Genomic_DNA"/>
</dbReference>
<dbReference type="EMBL" id="CP017708">
    <property type="protein sequence ID" value="AOY84951.2"/>
    <property type="molecule type" value="Genomic_DNA"/>
</dbReference>
<dbReference type="RefSeq" id="WP_229420225.1">
    <property type="nucleotide sequence ID" value="NZ_CP017708.2"/>
</dbReference>
<dbReference type="SMR" id="Q6E7K8"/>
<dbReference type="BioCyc" id="MetaCyc:MONOMER-19207"/>
<dbReference type="Proteomes" id="UP000176944">
    <property type="component" value="Chromosome"/>
</dbReference>
<dbReference type="GO" id="GO:0016020">
    <property type="term" value="C:membrane"/>
    <property type="evidence" value="ECO:0007669"/>
    <property type="project" value="UniProtKB-SubCell"/>
</dbReference>
<dbReference type="GO" id="GO:0016717">
    <property type="term" value="F:oxidoreductase activity, acting on paired donors, with oxidation of a pair of donors resulting in the reduction of molecular oxygen to two molecules of water"/>
    <property type="evidence" value="ECO:0007669"/>
    <property type="project" value="InterPro"/>
</dbReference>
<dbReference type="GO" id="GO:0006631">
    <property type="term" value="P:fatty acid metabolic process"/>
    <property type="evidence" value="ECO:0007669"/>
    <property type="project" value="UniProtKB-KW"/>
</dbReference>
<dbReference type="CDD" id="cd03505">
    <property type="entry name" value="Delta9-FADS-like"/>
    <property type="match status" value="1"/>
</dbReference>
<dbReference type="InterPro" id="IPR015876">
    <property type="entry name" value="Acyl-CoA_DS"/>
</dbReference>
<dbReference type="InterPro" id="IPR005804">
    <property type="entry name" value="FA_desaturase_dom"/>
</dbReference>
<dbReference type="PANTHER" id="PTHR11351">
    <property type="entry name" value="ACYL-COA DESATURASE"/>
    <property type="match status" value="1"/>
</dbReference>
<dbReference type="PANTHER" id="PTHR11351:SF3">
    <property type="entry name" value="BLL4393 PROTEIN"/>
    <property type="match status" value="1"/>
</dbReference>
<dbReference type="Pfam" id="PF00487">
    <property type="entry name" value="FA_desaturase"/>
    <property type="match status" value="1"/>
</dbReference>
<dbReference type="PRINTS" id="PR00075">
    <property type="entry name" value="FACDDSATRASE"/>
</dbReference>
<protein>
    <recommendedName>
        <fullName evidence="6">Hex-5-enoyl-[acyl-carrier protein] acetylenase</fullName>
        <ecNumber evidence="4">1.14.19.40</ecNumber>
    </recommendedName>
    <alternativeName>
        <fullName evidence="6">Jamaicamide biosynthesis protein B</fullName>
    </alternativeName>
</protein>
<accession>Q6E7K8</accession>
<accession>A0A1D9GBN2</accession>
<reference key="1">
    <citation type="journal article" date="2004" name="Chem. Biol.">
        <title>Structure and biosynthesis of the jamaicamides, new mixed polyketide-peptide neurotoxins from the marine cyanobacterium Lyngbya majuscula.</title>
        <authorList>
            <person name="Edwards D.J."/>
            <person name="Marquez B.L."/>
            <person name="Nogle L.M."/>
            <person name="McPhail K."/>
            <person name="Goeger D.E."/>
            <person name="Roberts M.A."/>
            <person name="Gerwick W.H."/>
        </authorList>
    </citation>
    <scope>NUCLEOTIDE SEQUENCE [GENOMIC DNA]</scope>
    <scope>GENE CLUSTER</scope>
    <source>
        <strain>JHB</strain>
    </source>
</reference>
<reference key="2">
    <citation type="journal article" date="2017" name="Proc. Natl. Acad. Sci. U.S.A.">
        <title>Comparative genomics uncovers the prolific and distinctive metabolic potential of the cyanobacterial genus Moorea.</title>
        <authorList>
            <person name="Leao T."/>
            <person name="Castelao G."/>
            <person name="Korobeynikov A."/>
            <person name="Monroe E.A."/>
            <person name="Podell S."/>
            <person name="Glukhov E."/>
            <person name="Allen E.E."/>
            <person name="Gerwick W.H."/>
            <person name="Gerwick L."/>
        </authorList>
    </citation>
    <scope>NUCLEOTIDE SEQUENCE [LARGE SCALE GENOMIC DNA]</scope>
    <source>
        <strain>JHB</strain>
    </source>
</reference>
<reference key="3">
    <citation type="journal article" date="2015" name="Nat. Chem. Biol.">
        <title>De novo biosynthesis of terminal alkyne-labeled natural products.</title>
        <authorList>
            <person name="Zhu X."/>
            <person name="Liu J."/>
            <person name="Zhang W."/>
        </authorList>
    </citation>
    <scope>FUNCTION</scope>
    <scope>CATALYTIC ACTIVITY</scope>
</reference>